<proteinExistence type="predicted"/>
<keyword id="KW-1185">Reference proteome</keyword>
<protein>
    <recommendedName>
        <fullName>Uncharacterized protein YpeQ</fullName>
    </recommendedName>
</protein>
<accession>P54165</accession>
<organism>
    <name type="scientific">Bacillus subtilis (strain 168)</name>
    <dbReference type="NCBI Taxonomy" id="224308"/>
    <lineage>
        <taxon>Bacteria</taxon>
        <taxon>Bacillati</taxon>
        <taxon>Bacillota</taxon>
        <taxon>Bacilli</taxon>
        <taxon>Bacillales</taxon>
        <taxon>Bacillaceae</taxon>
        <taxon>Bacillus</taxon>
    </lineage>
</organism>
<gene>
    <name type="primary">ypeQ</name>
    <name type="ordered locus">BSU21960</name>
</gene>
<reference key="1">
    <citation type="journal article" date="1996" name="Microbiology">
        <title>Organization of the Bacillus subtilis 168 chromosome between kdg and the attachment site of the SP beta prophage: use of long accurate PCR and yeast artificial chromosomes for sequencing.</title>
        <authorList>
            <person name="Capuano V."/>
            <person name="Galleron N."/>
            <person name="Pujic P."/>
            <person name="Sorokin A."/>
            <person name="Ehrlich S.D."/>
        </authorList>
    </citation>
    <scope>NUCLEOTIDE SEQUENCE [GENOMIC DNA]</scope>
    <source>
        <strain>168 / Marburg / ATCC 6051 / DSM 10 / JCM 1465 / NBRC 13719 / NCIMB 3610 / NRRL NRS-744 / VKM B-501</strain>
    </source>
</reference>
<reference key="2">
    <citation type="journal article" date="1997" name="Nature">
        <title>The complete genome sequence of the Gram-positive bacterium Bacillus subtilis.</title>
        <authorList>
            <person name="Kunst F."/>
            <person name="Ogasawara N."/>
            <person name="Moszer I."/>
            <person name="Albertini A.M."/>
            <person name="Alloni G."/>
            <person name="Azevedo V."/>
            <person name="Bertero M.G."/>
            <person name="Bessieres P."/>
            <person name="Bolotin A."/>
            <person name="Borchert S."/>
            <person name="Borriss R."/>
            <person name="Boursier L."/>
            <person name="Brans A."/>
            <person name="Braun M."/>
            <person name="Brignell S.C."/>
            <person name="Bron S."/>
            <person name="Brouillet S."/>
            <person name="Bruschi C.V."/>
            <person name="Caldwell B."/>
            <person name="Capuano V."/>
            <person name="Carter N.M."/>
            <person name="Choi S.-K."/>
            <person name="Codani J.-J."/>
            <person name="Connerton I.F."/>
            <person name="Cummings N.J."/>
            <person name="Daniel R.A."/>
            <person name="Denizot F."/>
            <person name="Devine K.M."/>
            <person name="Duesterhoeft A."/>
            <person name="Ehrlich S.D."/>
            <person name="Emmerson P.T."/>
            <person name="Entian K.-D."/>
            <person name="Errington J."/>
            <person name="Fabret C."/>
            <person name="Ferrari E."/>
            <person name="Foulger D."/>
            <person name="Fritz C."/>
            <person name="Fujita M."/>
            <person name="Fujita Y."/>
            <person name="Fuma S."/>
            <person name="Galizzi A."/>
            <person name="Galleron N."/>
            <person name="Ghim S.-Y."/>
            <person name="Glaser P."/>
            <person name="Goffeau A."/>
            <person name="Golightly E.J."/>
            <person name="Grandi G."/>
            <person name="Guiseppi G."/>
            <person name="Guy B.J."/>
            <person name="Haga K."/>
            <person name="Haiech J."/>
            <person name="Harwood C.R."/>
            <person name="Henaut A."/>
            <person name="Hilbert H."/>
            <person name="Holsappel S."/>
            <person name="Hosono S."/>
            <person name="Hullo M.-F."/>
            <person name="Itaya M."/>
            <person name="Jones L.-M."/>
            <person name="Joris B."/>
            <person name="Karamata D."/>
            <person name="Kasahara Y."/>
            <person name="Klaerr-Blanchard M."/>
            <person name="Klein C."/>
            <person name="Kobayashi Y."/>
            <person name="Koetter P."/>
            <person name="Koningstein G."/>
            <person name="Krogh S."/>
            <person name="Kumano M."/>
            <person name="Kurita K."/>
            <person name="Lapidus A."/>
            <person name="Lardinois S."/>
            <person name="Lauber J."/>
            <person name="Lazarevic V."/>
            <person name="Lee S.-M."/>
            <person name="Levine A."/>
            <person name="Liu H."/>
            <person name="Masuda S."/>
            <person name="Mauel C."/>
            <person name="Medigue C."/>
            <person name="Medina N."/>
            <person name="Mellado R.P."/>
            <person name="Mizuno M."/>
            <person name="Moestl D."/>
            <person name="Nakai S."/>
            <person name="Noback M."/>
            <person name="Noone D."/>
            <person name="O'Reilly M."/>
            <person name="Ogawa K."/>
            <person name="Ogiwara A."/>
            <person name="Oudega B."/>
            <person name="Park S.-H."/>
            <person name="Parro V."/>
            <person name="Pohl T.M."/>
            <person name="Portetelle D."/>
            <person name="Porwollik S."/>
            <person name="Prescott A.M."/>
            <person name="Presecan E."/>
            <person name="Pujic P."/>
            <person name="Purnelle B."/>
            <person name="Rapoport G."/>
            <person name="Rey M."/>
            <person name="Reynolds S."/>
            <person name="Rieger M."/>
            <person name="Rivolta C."/>
            <person name="Rocha E."/>
            <person name="Roche B."/>
            <person name="Rose M."/>
            <person name="Sadaie Y."/>
            <person name="Sato T."/>
            <person name="Scanlan E."/>
            <person name="Schleich S."/>
            <person name="Schroeter R."/>
            <person name="Scoffone F."/>
            <person name="Sekiguchi J."/>
            <person name="Sekowska A."/>
            <person name="Seror S.J."/>
            <person name="Serror P."/>
            <person name="Shin B.-S."/>
            <person name="Soldo B."/>
            <person name="Sorokin A."/>
            <person name="Tacconi E."/>
            <person name="Takagi T."/>
            <person name="Takahashi H."/>
            <person name="Takemaru K."/>
            <person name="Takeuchi M."/>
            <person name="Tamakoshi A."/>
            <person name="Tanaka T."/>
            <person name="Terpstra P."/>
            <person name="Tognoni A."/>
            <person name="Tosato V."/>
            <person name="Uchiyama S."/>
            <person name="Vandenbol M."/>
            <person name="Vannier F."/>
            <person name="Vassarotti A."/>
            <person name="Viari A."/>
            <person name="Wambutt R."/>
            <person name="Wedler E."/>
            <person name="Wedler H."/>
            <person name="Weitzenegger T."/>
            <person name="Winters P."/>
            <person name="Wipat A."/>
            <person name="Yamamoto H."/>
            <person name="Yamane K."/>
            <person name="Yasumoto K."/>
            <person name="Yata K."/>
            <person name="Yoshida K."/>
            <person name="Yoshikawa H.-F."/>
            <person name="Zumstein E."/>
            <person name="Yoshikawa H."/>
            <person name="Danchin A."/>
        </authorList>
    </citation>
    <scope>NUCLEOTIDE SEQUENCE [LARGE SCALE GENOMIC DNA]</scope>
    <source>
        <strain>168</strain>
    </source>
</reference>
<dbReference type="EMBL" id="L77246">
    <property type="protein sequence ID" value="AAA96621.1"/>
    <property type="molecule type" value="Genomic_DNA"/>
</dbReference>
<dbReference type="EMBL" id="AL009126">
    <property type="protein sequence ID" value="CAB14114.1"/>
    <property type="molecule type" value="Genomic_DNA"/>
</dbReference>
<dbReference type="PIR" id="G69934">
    <property type="entry name" value="G69934"/>
</dbReference>
<dbReference type="RefSeq" id="NP_390079.1">
    <property type="nucleotide sequence ID" value="NC_000964.3"/>
</dbReference>
<dbReference type="RefSeq" id="WP_004399003.1">
    <property type="nucleotide sequence ID" value="NZ_OZ025638.1"/>
</dbReference>
<dbReference type="FunCoup" id="P54165">
    <property type="interactions" value="15"/>
</dbReference>
<dbReference type="STRING" id="224308.BSU21960"/>
<dbReference type="PaxDb" id="224308-BSU21960"/>
<dbReference type="EnsemblBacteria" id="CAB14114">
    <property type="protein sequence ID" value="CAB14114"/>
    <property type="gene ID" value="BSU_21960"/>
</dbReference>
<dbReference type="GeneID" id="939077"/>
<dbReference type="KEGG" id="bsu:BSU21960"/>
<dbReference type="PATRIC" id="fig|224308.179.peg.2398"/>
<dbReference type="eggNOG" id="ENOG50331EA">
    <property type="taxonomic scope" value="Bacteria"/>
</dbReference>
<dbReference type="InParanoid" id="P54165"/>
<dbReference type="OrthoDB" id="2454446at2"/>
<dbReference type="BioCyc" id="BSUB:BSU21960-MONOMER"/>
<dbReference type="Proteomes" id="UP000001570">
    <property type="component" value="Chromosome"/>
</dbReference>
<dbReference type="InterPro" id="IPR019718">
    <property type="entry name" value="DUF2602"/>
</dbReference>
<dbReference type="Pfam" id="PF10782">
    <property type="entry name" value="zf-C2HCIx2C"/>
    <property type="match status" value="1"/>
</dbReference>
<name>YPEQ_BACSU</name>
<feature type="chain" id="PRO_0000049689" description="Uncharacterized protein YpeQ">
    <location>
        <begin position="1"/>
        <end position="60"/>
    </location>
</feature>
<sequence length="60" mass="7210">MDKKMIFKELTELHDEYCKDCFIKKQFRKEFGKTYAHSFCINKCTVGEKLKQYGDVLTNH</sequence>